<comment type="function">
    <text evidence="1">May have the capacity to recognize and bind specific classes of odorants. May act as a carrier molecule, transporting odorants across the mucus layer to access receptor sites. May serve as a primary defense mechanism by recognizing and removing potentially harmful odorants or pathogenic microorganisms from the mucosa or clearing excess odorant from mucus to enable new odorant stimuli to be received (By similarity).</text>
</comment>
<comment type="subcellular location">
    <subcellularLocation>
        <location evidence="1">Secreted</location>
    </subcellularLocation>
    <subcellularLocation>
        <location evidence="4">Cytoplasm</location>
    </subcellularLocation>
</comment>
<comment type="alternative products">
    <event type="alternative splicing"/>
    <isoform>
        <id>P59827-1</id>
        <name>1</name>
        <sequence type="displayed"/>
    </isoform>
    <isoform>
        <id>P59827-2</id>
        <name>2</name>
        <sequence type="described" ref="VSP_037828"/>
    </isoform>
</comment>
<comment type="tissue specificity">
    <text evidence="3">Expressed in nasal tissue.</text>
</comment>
<comment type="similarity">
    <text evidence="6">Belongs to the BPI/LBP/Plunc superfamily. BPI/LBP family.</text>
</comment>
<accession>P59827</accession>
<accession>Q5TDX6</accession>
<protein>
    <recommendedName>
        <fullName>BPI fold-containing family B member 4</fullName>
    </recommendedName>
    <alternativeName>
        <fullName>Ligand-binding protein RY2G5</fullName>
    </alternativeName>
    <alternativeName>
        <fullName>Long palate, lung and nasal epithelium carcinoma-associated protein 4</fullName>
    </alternativeName>
</protein>
<name>BPIB4_HUMAN</name>
<proteinExistence type="evidence at protein level"/>
<reference key="1">
    <citation type="journal article" date="2003" name="Genomics">
        <title>Expansion of the BPI family by duplication on human chromosome 20: characterization of the RY gene cluster in 20q11.21 encoding olfactory transporters/antimicrobial-like peptides.</title>
        <authorList>
            <person name="Andrault J.-B."/>
            <person name="Gaillard I."/>
            <person name="Giorgi D."/>
            <person name="Rouquier S."/>
        </authorList>
    </citation>
    <scope>NUCLEOTIDE SEQUENCE [MRNA] (ISOFORM 2)</scope>
    <scope>SUBCELLULAR LOCATION</scope>
    <source>
        <tissue>Fetal brain</tissue>
    </source>
</reference>
<reference key="2">
    <citation type="journal article" date="2001" name="Nature">
        <title>The DNA sequence and comparative analysis of human chromosome 20.</title>
        <authorList>
            <person name="Deloukas P."/>
            <person name="Matthews L.H."/>
            <person name="Ashurst J.L."/>
            <person name="Burton J."/>
            <person name="Gilbert J.G.R."/>
            <person name="Jones M."/>
            <person name="Stavrides G."/>
            <person name="Almeida J.P."/>
            <person name="Babbage A.K."/>
            <person name="Bagguley C.L."/>
            <person name="Bailey J."/>
            <person name="Barlow K.F."/>
            <person name="Bates K.N."/>
            <person name="Beard L.M."/>
            <person name="Beare D.M."/>
            <person name="Beasley O.P."/>
            <person name="Bird C.P."/>
            <person name="Blakey S.E."/>
            <person name="Bridgeman A.M."/>
            <person name="Brown A.J."/>
            <person name="Buck D."/>
            <person name="Burrill W.D."/>
            <person name="Butler A.P."/>
            <person name="Carder C."/>
            <person name="Carter N.P."/>
            <person name="Chapman J.C."/>
            <person name="Clamp M."/>
            <person name="Clark G."/>
            <person name="Clark L.N."/>
            <person name="Clark S.Y."/>
            <person name="Clee C.M."/>
            <person name="Clegg S."/>
            <person name="Cobley V.E."/>
            <person name="Collier R.E."/>
            <person name="Connor R.E."/>
            <person name="Corby N.R."/>
            <person name="Coulson A."/>
            <person name="Coville G.J."/>
            <person name="Deadman R."/>
            <person name="Dhami P.D."/>
            <person name="Dunn M."/>
            <person name="Ellington A.G."/>
            <person name="Frankland J.A."/>
            <person name="Fraser A."/>
            <person name="French L."/>
            <person name="Garner P."/>
            <person name="Grafham D.V."/>
            <person name="Griffiths C."/>
            <person name="Griffiths M.N.D."/>
            <person name="Gwilliam R."/>
            <person name="Hall R.E."/>
            <person name="Hammond S."/>
            <person name="Harley J.L."/>
            <person name="Heath P.D."/>
            <person name="Ho S."/>
            <person name="Holden J.L."/>
            <person name="Howden P.J."/>
            <person name="Huckle E."/>
            <person name="Hunt A.R."/>
            <person name="Hunt S.E."/>
            <person name="Jekosch K."/>
            <person name="Johnson C.M."/>
            <person name="Johnson D."/>
            <person name="Kay M.P."/>
            <person name="Kimberley A.M."/>
            <person name="King A."/>
            <person name="Knights A."/>
            <person name="Laird G.K."/>
            <person name="Lawlor S."/>
            <person name="Lehvaeslaiho M.H."/>
            <person name="Leversha M.A."/>
            <person name="Lloyd C."/>
            <person name="Lloyd D.M."/>
            <person name="Lovell J.D."/>
            <person name="Marsh V.L."/>
            <person name="Martin S.L."/>
            <person name="McConnachie L.J."/>
            <person name="McLay K."/>
            <person name="McMurray A.A."/>
            <person name="Milne S.A."/>
            <person name="Mistry D."/>
            <person name="Moore M.J.F."/>
            <person name="Mullikin J.C."/>
            <person name="Nickerson T."/>
            <person name="Oliver K."/>
            <person name="Parker A."/>
            <person name="Patel R."/>
            <person name="Pearce T.A.V."/>
            <person name="Peck A.I."/>
            <person name="Phillimore B.J.C.T."/>
            <person name="Prathalingam S.R."/>
            <person name="Plumb R.W."/>
            <person name="Ramsay H."/>
            <person name="Rice C.M."/>
            <person name="Ross M.T."/>
            <person name="Scott C.E."/>
            <person name="Sehra H.K."/>
            <person name="Shownkeen R."/>
            <person name="Sims S."/>
            <person name="Skuce C.D."/>
            <person name="Smith M.L."/>
            <person name="Soderlund C."/>
            <person name="Steward C.A."/>
            <person name="Sulston J.E."/>
            <person name="Swann R.M."/>
            <person name="Sycamore N."/>
            <person name="Taylor R."/>
            <person name="Tee L."/>
            <person name="Thomas D.W."/>
            <person name="Thorpe A."/>
            <person name="Tracey A."/>
            <person name="Tromans A.C."/>
            <person name="Vaudin M."/>
            <person name="Wall M."/>
            <person name="Wallis J.M."/>
            <person name="Whitehead S.L."/>
            <person name="Whittaker P."/>
            <person name="Willey D.L."/>
            <person name="Williams L."/>
            <person name="Williams S.A."/>
            <person name="Wilming L."/>
            <person name="Wray P.W."/>
            <person name="Hubbard T."/>
            <person name="Durbin R.M."/>
            <person name="Bentley D.R."/>
            <person name="Beck S."/>
            <person name="Rogers J."/>
        </authorList>
    </citation>
    <scope>NUCLEOTIDE SEQUENCE [LARGE SCALE GENOMIC DNA]</scope>
</reference>
<reference key="3">
    <citation type="journal article" date="2002" name="Hum. Mol. Genet.">
        <title>PLUNC: a novel family of candidate host defence proteins expressed in the upper airways and nasopharynx.</title>
        <authorList>
            <person name="Bingle C.D."/>
            <person name="Craven C.J."/>
        </authorList>
    </citation>
    <scope>IDENTIFICATION</scope>
    <scope>TISSUE SPECIFICITY</scope>
</reference>
<reference key="4">
    <citation type="journal article" date="2004" name="Protein Sci.">
        <title>Phylogenetic and evolutionary analysis of the PLUNC gene family.</title>
        <authorList>
            <person name="Bingle C.D."/>
            <person name="LeClair E.E."/>
            <person name="Havard S."/>
            <person name="Bingle L."/>
            <person name="Gillingham P."/>
            <person name="Craven C.J."/>
        </authorList>
    </citation>
    <scope>IDENTIFICATION</scope>
</reference>
<feature type="signal peptide" evidence="2">
    <location>
        <begin position="1"/>
        <end position="18"/>
    </location>
</feature>
<feature type="chain" id="PRO_0000089159" description="BPI fold-containing family B member 4">
    <location>
        <begin position="19"/>
        <end position="614"/>
    </location>
</feature>
<feature type="glycosylation site" description="N-linked (GlcNAc...) asparagine" evidence="2">
    <location>
        <position position="273"/>
    </location>
</feature>
<feature type="disulfide bond" evidence="1">
    <location>
        <begin position="295"/>
        <end position="332"/>
    </location>
</feature>
<feature type="splice variant" id="VSP_037828" description="In isoform 2." evidence="5">
    <location>
        <begin position="1"/>
        <end position="39"/>
    </location>
</feature>
<feature type="sequence variant" id="VAR_059372" description="In dbSNP:rs2424943.">
    <original>G</original>
    <variation>W</variation>
    <location>
        <position position="167"/>
    </location>
</feature>
<feature type="sequence variant" id="VAR_055998" description="In dbSNP:rs4339026.">
    <original>D</original>
    <variation>G</variation>
    <location>
        <position position="199"/>
    </location>
</feature>
<feature type="sequence variant" id="VAR_055999" description="In dbSNP:rs2424943.">
    <original>G</original>
    <variation>W</variation>
    <location>
        <position position="206"/>
    </location>
</feature>
<feature type="sequence variant" id="VAR_059373" description="In dbSNP:rs2070325.">
    <original>I</original>
    <variation>V</variation>
    <location>
        <position position="229"/>
    </location>
</feature>
<feature type="sequence variant" id="VAR_056000" description="In dbSNP:rs2070325.">
    <original>I</original>
    <variation>V</variation>
    <location>
        <position position="268"/>
    </location>
</feature>
<feature type="sequence variant" id="VAR_056001" description="In dbSNP:rs2889732.">
    <original>N</original>
    <variation>T</variation>
    <location>
        <position position="320"/>
    </location>
</feature>
<feature type="sequence variant" id="VAR_069042" description="In dbSNP:rs11699009.">
    <original>F</original>
    <variation>L</variation>
    <location>
        <position position="527"/>
    </location>
</feature>
<feature type="sequence variant" id="VAR_069043" description="In dbSNP:rs11696307.">
    <original>T</original>
    <variation>I</variation>
    <location>
        <position position="533"/>
    </location>
</feature>
<evidence type="ECO:0000250" key="1"/>
<evidence type="ECO:0000255" key="2"/>
<evidence type="ECO:0000269" key="3">
    <source>
    </source>
</evidence>
<evidence type="ECO:0000269" key="4">
    <source>
    </source>
</evidence>
<evidence type="ECO:0000303" key="5">
    <source>
    </source>
</evidence>
<evidence type="ECO:0000305" key="6"/>
<gene>
    <name type="primary">BPIFB4</name>
    <name type="synonym">C20orf186</name>
    <name type="synonym">LPLUNC4</name>
</gene>
<keyword id="KW-0025">Alternative splicing</keyword>
<keyword id="KW-0963">Cytoplasm</keyword>
<keyword id="KW-1015">Disulfide bond</keyword>
<keyword id="KW-0325">Glycoprotein</keyword>
<keyword id="KW-1267">Proteomics identification</keyword>
<keyword id="KW-1185">Reference proteome</keyword>
<keyword id="KW-0964">Secreted</keyword>
<keyword id="KW-0732">Signal</keyword>
<dbReference type="EMBL" id="AF549190">
    <property type="protein sequence ID" value="AAP84990.1"/>
    <property type="molecule type" value="mRNA"/>
</dbReference>
<dbReference type="EMBL" id="AL121756">
    <property type="status" value="NOT_ANNOTATED_CDS"/>
    <property type="molecule type" value="Genomic_DNA"/>
</dbReference>
<dbReference type="CCDS" id="CCDS13213.2">
    <molecule id="P59827-1"/>
</dbReference>
<dbReference type="RefSeq" id="NP_872325.2">
    <molecule id="P59827-1"/>
    <property type="nucleotide sequence ID" value="NM_182519.3"/>
</dbReference>
<dbReference type="SMR" id="P59827"/>
<dbReference type="BioGRID" id="127251">
    <property type="interactions" value="1"/>
</dbReference>
<dbReference type="FunCoup" id="P59827">
    <property type="interactions" value="22"/>
</dbReference>
<dbReference type="STRING" id="9606.ENSP00000364632"/>
<dbReference type="GlyCosmos" id="P59827">
    <property type="glycosylation" value="1 site, No reported glycans"/>
</dbReference>
<dbReference type="GlyGen" id="P59827">
    <property type="glycosylation" value="1 site"/>
</dbReference>
<dbReference type="iPTMnet" id="P59827"/>
<dbReference type="PhosphoSitePlus" id="P59827"/>
<dbReference type="BioMuta" id="BPIFB4"/>
<dbReference type="DMDM" id="215274098"/>
<dbReference type="jPOST" id="P59827"/>
<dbReference type="MassIVE" id="P59827"/>
<dbReference type="PaxDb" id="9606-ENSP00000364632"/>
<dbReference type="PeptideAtlas" id="P59827"/>
<dbReference type="ProteomicsDB" id="57163">
    <molecule id="P59827-1"/>
</dbReference>
<dbReference type="Antibodypedia" id="25501">
    <property type="antibodies" value="10 antibodies from 8 providers"/>
</dbReference>
<dbReference type="DNASU" id="149954"/>
<dbReference type="Ensembl" id="ENST00000375483.4">
    <molecule id="P59827-1"/>
    <property type="protein sequence ID" value="ENSP00000364632.3"/>
    <property type="gene ID" value="ENSG00000186191.9"/>
</dbReference>
<dbReference type="GeneID" id="149954"/>
<dbReference type="KEGG" id="hsa:149954"/>
<dbReference type="MANE-Select" id="ENST00000375483.4">
    <property type="protein sequence ID" value="ENSP00000364632.3"/>
    <property type="RefSeq nucleotide sequence ID" value="NM_182519.3"/>
    <property type="RefSeq protein sequence ID" value="NP_872325.2"/>
</dbReference>
<dbReference type="UCSC" id="uc010zue.3">
    <molecule id="P59827-1"/>
    <property type="organism name" value="human"/>
</dbReference>
<dbReference type="AGR" id="HGNC:16179"/>
<dbReference type="CTD" id="149954"/>
<dbReference type="DisGeNET" id="149954"/>
<dbReference type="GeneCards" id="BPIFB4"/>
<dbReference type="HGNC" id="HGNC:16179">
    <property type="gene designation" value="BPIFB4"/>
</dbReference>
<dbReference type="HPA" id="ENSG00000186191">
    <property type="expression patterns" value="Tissue enriched (pituitary)"/>
</dbReference>
<dbReference type="MIM" id="615718">
    <property type="type" value="gene"/>
</dbReference>
<dbReference type="neXtProt" id="NX_P59827"/>
<dbReference type="OpenTargets" id="ENSG00000186191"/>
<dbReference type="PharmGKB" id="PA25728"/>
<dbReference type="VEuPathDB" id="HostDB:ENSG00000186191"/>
<dbReference type="eggNOG" id="KOG4160">
    <property type="taxonomic scope" value="Eukaryota"/>
</dbReference>
<dbReference type="GeneTree" id="ENSGT01100000263546"/>
<dbReference type="HOGENOM" id="CLU_031635_0_0_1"/>
<dbReference type="InParanoid" id="P59827"/>
<dbReference type="OrthoDB" id="9905567at2759"/>
<dbReference type="PAN-GO" id="P59827">
    <property type="GO annotations" value="0 GO annotations based on evolutionary models"/>
</dbReference>
<dbReference type="PhylomeDB" id="P59827"/>
<dbReference type="TreeFam" id="TF315617"/>
<dbReference type="PathwayCommons" id="P59827"/>
<dbReference type="Reactome" id="R-HSA-6803157">
    <property type="pathway name" value="Antimicrobial peptides"/>
</dbReference>
<dbReference type="BioGRID-ORCS" id="149954">
    <property type="hits" value="16 hits in 1149 CRISPR screens"/>
</dbReference>
<dbReference type="GenomeRNAi" id="149954"/>
<dbReference type="Pharos" id="P59827">
    <property type="development level" value="Tbio"/>
</dbReference>
<dbReference type="PRO" id="PR:P59827"/>
<dbReference type="Proteomes" id="UP000005640">
    <property type="component" value="Chromosome 20"/>
</dbReference>
<dbReference type="RNAct" id="P59827">
    <property type="molecule type" value="protein"/>
</dbReference>
<dbReference type="Bgee" id="ENSG00000186191">
    <property type="expression patterns" value="Expressed in male germ line stem cell (sensu Vertebrata) in testis and 57 other cell types or tissues"/>
</dbReference>
<dbReference type="ExpressionAtlas" id="P59827">
    <property type="expression patterns" value="baseline and differential"/>
</dbReference>
<dbReference type="GO" id="GO:0015629">
    <property type="term" value="C:actin cytoskeleton"/>
    <property type="evidence" value="ECO:0000314"/>
    <property type="project" value="HPA"/>
</dbReference>
<dbReference type="GO" id="GO:0005829">
    <property type="term" value="C:cytosol"/>
    <property type="evidence" value="ECO:0000314"/>
    <property type="project" value="HPA"/>
</dbReference>
<dbReference type="GO" id="GO:0005576">
    <property type="term" value="C:extracellular region"/>
    <property type="evidence" value="ECO:0007669"/>
    <property type="project" value="UniProtKB-SubCell"/>
</dbReference>
<dbReference type="GO" id="GO:0008289">
    <property type="term" value="F:lipid binding"/>
    <property type="evidence" value="ECO:0007669"/>
    <property type="project" value="InterPro"/>
</dbReference>
<dbReference type="Gene3D" id="3.15.10.10">
    <property type="entry name" value="Bactericidal permeability-increasing protein, domain 1"/>
    <property type="match status" value="1"/>
</dbReference>
<dbReference type="Gene3D" id="3.15.20.10">
    <property type="entry name" value="Bactericidal permeability-increasing protein, domain 2"/>
    <property type="match status" value="1"/>
</dbReference>
<dbReference type="InterPro" id="IPR017943">
    <property type="entry name" value="Bactericidal_perm-incr_a/b_dom"/>
</dbReference>
<dbReference type="InterPro" id="IPR051660">
    <property type="entry name" value="BPI_fold-BPI/LBP"/>
</dbReference>
<dbReference type="InterPro" id="IPR001124">
    <property type="entry name" value="Lipid-bd_serum_glycop_C"/>
</dbReference>
<dbReference type="InterPro" id="IPR017942">
    <property type="entry name" value="Lipid-bd_serum_glycop_N"/>
</dbReference>
<dbReference type="PANTHER" id="PTHR46019:SF4">
    <property type="entry name" value="BPI FOLD-CONTAINING FAMILY B MEMBER 4"/>
    <property type="match status" value="1"/>
</dbReference>
<dbReference type="PANTHER" id="PTHR46019">
    <property type="entry name" value="BPI FOLD-CONTAINING FAMILY B MEMBER 4-RELATED"/>
    <property type="match status" value="1"/>
</dbReference>
<dbReference type="Pfam" id="PF01273">
    <property type="entry name" value="LBP_BPI_CETP"/>
    <property type="match status" value="1"/>
</dbReference>
<dbReference type="Pfam" id="PF02886">
    <property type="entry name" value="LBP_BPI_CETP_C"/>
    <property type="match status" value="1"/>
</dbReference>
<dbReference type="SMART" id="SM00328">
    <property type="entry name" value="BPI1"/>
    <property type="match status" value="1"/>
</dbReference>
<dbReference type="SMART" id="SM00329">
    <property type="entry name" value="BPI2"/>
    <property type="match status" value="1"/>
</dbReference>
<dbReference type="SUPFAM" id="SSF55394">
    <property type="entry name" value="Bactericidal permeability-increasing protein, BPI"/>
    <property type="match status" value="2"/>
</dbReference>
<organism>
    <name type="scientific">Homo sapiens</name>
    <name type="common">Human</name>
    <dbReference type="NCBI Taxonomy" id="9606"/>
    <lineage>
        <taxon>Eukaryota</taxon>
        <taxon>Metazoa</taxon>
        <taxon>Chordata</taxon>
        <taxon>Craniata</taxon>
        <taxon>Vertebrata</taxon>
        <taxon>Euteleostomi</taxon>
        <taxon>Mammalia</taxon>
        <taxon>Eutheria</taxon>
        <taxon>Euarchontoglires</taxon>
        <taxon>Primates</taxon>
        <taxon>Haplorrhini</taxon>
        <taxon>Catarrhini</taxon>
        <taxon>Hominidae</taxon>
        <taxon>Homo</taxon>
    </lineage>
</organism>
<sequence>MWMAWCVAALSVVAVCGTSHETNTVLRVTKDVLSNAISGMLQQSDALHSALREVPLGVGDIPYNDFHVRGPPPVYTNGKKLDGIYQYGHIETNDNTAQLGGKYRYGEILESEGSIRDLRNSGYRSAENAYGGHRGLGRYRAAPVGRLHRRELQPGEIPPGVATGAVGPGGLLGTGGMLAADGILAGQGGLLGGGGLLGDGGLLGGGGVLGVLGEGGILSTVQGITGLRIVELTLPRVSVRLLPGVGVYLSLYTRVAINGKSLIGFLDIAVEVNITAKVRLTMDRTGYPRLVIERCDTLLGGIKVKLLRGLLPNLVDNLVNRVLADVLPDLLCPIVDVVLGLVNDQLGLVDSLIPLGILGSVQYTFSSLPLVTGEFLELDLNTLVGEAGGGLIDYPLGWPAVSPKPMPELPPMGDNTKSQLAMSANFLGSVLTLLQKQHALDLDITNGMFEELPPLTTATLGALIPKVFQQYPESCPLIIRIQVLNPPSVMLQKDKALVKVLATAEVMVSQPKDLETTICLIDVDTEFLASFSTEGDKLMIDAKLEKTSLNLRTSNVGNFDIGLMEVLVEKIFDLAFMPAMNAVLGSGVPLPKILNIDFSNADIDVLEDLLVLSA</sequence>